<reference key="1">
    <citation type="journal article" date="2000" name="Nature">
        <title>The genome sequence of the plant pathogen Xylella fastidiosa.</title>
        <authorList>
            <person name="Simpson A.J.G."/>
            <person name="Reinach F.C."/>
            <person name="Arruda P."/>
            <person name="Abreu F.A."/>
            <person name="Acencio M."/>
            <person name="Alvarenga R."/>
            <person name="Alves L.M.C."/>
            <person name="Araya J.E."/>
            <person name="Baia G.S."/>
            <person name="Baptista C.S."/>
            <person name="Barros M.H."/>
            <person name="Bonaccorsi E.D."/>
            <person name="Bordin S."/>
            <person name="Bove J.M."/>
            <person name="Briones M.R.S."/>
            <person name="Bueno M.R.P."/>
            <person name="Camargo A.A."/>
            <person name="Camargo L.E.A."/>
            <person name="Carraro D.M."/>
            <person name="Carrer H."/>
            <person name="Colauto N.B."/>
            <person name="Colombo C."/>
            <person name="Costa F.F."/>
            <person name="Costa M.C.R."/>
            <person name="Costa-Neto C.M."/>
            <person name="Coutinho L.L."/>
            <person name="Cristofani M."/>
            <person name="Dias-Neto E."/>
            <person name="Docena C."/>
            <person name="El-Dorry H."/>
            <person name="Facincani A.P."/>
            <person name="Ferreira A.J.S."/>
            <person name="Ferreira V.C.A."/>
            <person name="Ferro J.A."/>
            <person name="Fraga J.S."/>
            <person name="Franca S.C."/>
            <person name="Franco M.C."/>
            <person name="Frohme M."/>
            <person name="Furlan L.R."/>
            <person name="Garnier M."/>
            <person name="Goldman G.H."/>
            <person name="Goldman M.H.S."/>
            <person name="Gomes S.L."/>
            <person name="Gruber A."/>
            <person name="Ho P.L."/>
            <person name="Hoheisel J.D."/>
            <person name="Junqueira M.L."/>
            <person name="Kemper E.L."/>
            <person name="Kitajima J.P."/>
            <person name="Krieger J.E."/>
            <person name="Kuramae E.E."/>
            <person name="Laigret F."/>
            <person name="Lambais M.R."/>
            <person name="Leite L.C.C."/>
            <person name="Lemos E.G.M."/>
            <person name="Lemos M.V.F."/>
            <person name="Lopes S.A."/>
            <person name="Lopes C.R."/>
            <person name="Machado J.A."/>
            <person name="Machado M.A."/>
            <person name="Madeira A.M.B.N."/>
            <person name="Madeira H.M.F."/>
            <person name="Marino C.L."/>
            <person name="Marques M.V."/>
            <person name="Martins E.A.L."/>
            <person name="Martins E.M.F."/>
            <person name="Matsukuma A.Y."/>
            <person name="Menck C.F.M."/>
            <person name="Miracca E.C."/>
            <person name="Miyaki C.Y."/>
            <person name="Monteiro-Vitorello C.B."/>
            <person name="Moon D.H."/>
            <person name="Nagai M.A."/>
            <person name="Nascimento A.L.T.O."/>
            <person name="Netto L.E.S."/>
            <person name="Nhani A. Jr."/>
            <person name="Nobrega F.G."/>
            <person name="Nunes L.R."/>
            <person name="Oliveira M.A."/>
            <person name="de Oliveira M.C."/>
            <person name="de Oliveira R.C."/>
            <person name="Palmieri D.A."/>
            <person name="Paris A."/>
            <person name="Peixoto B.R."/>
            <person name="Pereira G.A.G."/>
            <person name="Pereira H.A. Jr."/>
            <person name="Pesquero J.B."/>
            <person name="Quaggio R.B."/>
            <person name="Roberto P.G."/>
            <person name="Rodrigues V."/>
            <person name="de Rosa A.J.M."/>
            <person name="de Rosa V.E. Jr."/>
            <person name="de Sa R.G."/>
            <person name="Santelli R.V."/>
            <person name="Sawasaki H.E."/>
            <person name="da Silva A.C.R."/>
            <person name="da Silva A.M."/>
            <person name="da Silva F.R."/>
            <person name="Silva W.A. Jr."/>
            <person name="da Silveira J.F."/>
            <person name="Silvestri M.L.Z."/>
            <person name="Siqueira W.J."/>
            <person name="de Souza A.A."/>
            <person name="de Souza A.P."/>
            <person name="Terenzi M.F."/>
            <person name="Truffi D."/>
            <person name="Tsai S.M."/>
            <person name="Tsuhako M.H."/>
            <person name="Vallada H."/>
            <person name="Van Sluys M.A."/>
            <person name="Verjovski-Almeida S."/>
            <person name="Vettore A.L."/>
            <person name="Zago M.A."/>
            <person name="Zatz M."/>
            <person name="Meidanis J."/>
            <person name="Setubal J.C."/>
        </authorList>
    </citation>
    <scope>NUCLEOTIDE SEQUENCE [LARGE SCALE GENOMIC DNA]</scope>
    <source>
        <strain>9a5c</strain>
    </source>
</reference>
<feature type="chain" id="PRO_0000366861" description="Ribosomal RNA large subunit methyltransferase K/L">
    <location>
        <begin position="1"/>
        <end position="724"/>
    </location>
</feature>
<feature type="domain" description="THUMP" evidence="1">
    <location>
        <begin position="42"/>
        <end position="153"/>
    </location>
</feature>
<evidence type="ECO:0000255" key="1">
    <source>
        <dbReference type="HAMAP-Rule" id="MF_01858"/>
    </source>
</evidence>
<evidence type="ECO:0000305" key="2"/>
<protein>
    <recommendedName>
        <fullName evidence="1">Ribosomal RNA large subunit methyltransferase K/L</fullName>
    </recommendedName>
    <domain>
        <recommendedName>
            <fullName evidence="1">23S rRNA m2G2445 methyltransferase</fullName>
            <ecNumber evidence="1">2.1.1.173</ecNumber>
        </recommendedName>
        <alternativeName>
            <fullName evidence="1">rRNA (guanine-N(2)-)-methyltransferase RlmL</fullName>
        </alternativeName>
    </domain>
    <domain>
        <recommendedName>
            <fullName evidence="1">23S rRNA m7G2069 methyltransferase</fullName>
            <ecNumber evidence="1">2.1.1.264</ecNumber>
        </recommendedName>
        <alternativeName>
            <fullName evidence="1">rRNA (guanine-N(7)-)-methyltransferase RlmK</fullName>
        </alternativeName>
    </domain>
</protein>
<proteinExistence type="inferred from homology"/>
<name>RLMKL_XYLFA</name>
<gene>
    <name evidence="1" type="primary">rlmL</name>
    <name type="ordered locus">XF_2651</name>
</gene>
<accession>Q9PA69</accession>
<organism>
    <name type="scientific">Xylella fastidiosa (strain 9a5c)</name>
    <dbReference type="NCBI Taxonomy" id="160492"/>
    <lineage>
        <taxon>Bacteria</taxon>
        <taxon>Pseudomonadati</taxon>
        <taxon>Pseudomonadota</taxon>
        <taxon>Gammaproteobacteria</taxon>
        <taxon>Lysobacterales</taxon>
        <taxon>Lysobacteraceae</taxon>
        <taxon>Xylella</taxon>
    </lineage>
</organism>
<sequence length="724" mass="78886">MRFFVSCAKGLEYLLVDEVLALGAVGATATVAGVNVEGGLCDAQRLVLWSRLASRVLWPLAAFACADEDALYAGVAALPWVEHVLPGQTLAVDAHVSGEAITHARYAAQRVKDAVVDTLRDAGVVRPSVDVEHPDVRLNLSLRKGRATLSVDLGGRALHHRGWRQAPHAASLKEHLAAAVLLRAGWAKVYAEGGGLLDPMCGSGTLLIEGALMVADVAPGLSRYADPDAISHVSVAERPVLLPSRWRGFDVVAWEALVVDAQQRARRGLAELRPVLHGSDIDPRALGAAFANARAAGVQDAIEFVVAGIDVLPAVFEPHGVVVCNAPYDVRLAANPGLYRHLGDALRRVVPRWRAALVCGSSPLAFATGLRAGKKYQFFNGALECVLIVCDPVVPLAREAGGAQALSEGAQMVANRLRKNVQRLKKWRMRAGVECYRVYDADLPEYAAAIDVYQEVDGARRLFLHVQEYAAPASIPEGDVRRRRHELLAAVRAVFDVSVAQVALKTRQRGKGGSQYGCFAQRGEFFHVCEHGALLRVNLFDYLDTGLFLDHRPLRARMAREAVGKRFLNVFCYTGVASVEAAVAGAAATTSVDLSSTYLHWCTDNFALNGQGGVRHRLVQADALAWLEAERGQYDVIFCDPPTFSNSARADDFDVQRDHVRLLRAAVARLTPGGVLYFSNNFRRFRLDVDAVAAFAQCEEISPVTIDLDFSRNTRIHRTWLLWR</sequence>
<dbReference type="EC" id="2.1.1.173" evidence="1"/>
<dbReference type="EC" id="2.1.1.264" evidence="1"/>
<dbReference type="EMBL" id="AE003849">
    <property type="protein sequence ID" value="AAF85448.1"/>
    <property type="status" value="ALT_INIT"/>
    <property type="molecule type" value="Genomic_DNA"/>
</dbReference>
<dbReference type="PIR" id="C82529">
    <property type="entry name" value="C82529"/>
</dbReference>
<dbReference type="SMR" id="Q9PA69"/>
<dbReference type="STRING" id="160492.XF_2651"/>
<dbReference type="KEGG" id="xfa:XF_2651"/>
<dbReference type="PATRIC" id="fig|160492.11.peg.2810"/>
<dbReference type="eggNOG" id="COG0116">
    <property type="taxonomic scope" value="Bacteria"/>
</dbReference>
<dbReference type="eggNOG" id="COG1092">
    <property type="taxonomic scope" value="Bacteria"/>
</dbReference>
<dbReference type="HOGENOM" id="CLU_014042_2_0_6"/>
<dbReference type="Proteomes" id="UP000000812">
    <property type="component" value="Chromosome"/>
</dbReference>
<dbReference type="GO" id="GO:0005737">
    <property type="term" value="C:cytoplasm"/>
    <property type="evidence" value="ECO:0007669"/>
    <property type="project" value="UniProtKB-SubCell"/>
</dbReference>
<dbReference type="GO" id="GO:0052915">
    <property type="term" value="F:23S rRNA (guanine(2445)-N(2))-methyltransferase activity"/>
    <property type="evidence" value="ECO:0007669"/>
    <property type="project" value="UniProtKB-UniRule"/>
</dbReference>
<dbReference type="GO" id="GO:0003723">
    <property type="term" value="F:RNA binding"/>
    <property type="evidence" value="ECO:0007669"/>
    <property type="project" value="UniProtKB-KW"/>
</dbReference>
<dbReference type="GO" id="GO:0070043">
    <property type="term" value="F:rRNA (guanine-N7-)-methyltransferase activity"/>
    <property type="evidence" value="ECO:0007669"/>
    <property type="project" value="UniProtKB-UniRule"/>
</dbReference>
<dbReference type="CDD" id="cd02440">
    <property type="entry name" value="AdoMet_MTases"/>
    <property type="match status" value="1"/>
</dbReference>
<dbReference type="CDD" id="cd11715">
    <property type="entry name" value="THUMP_AdoMetMT"/>
    <property type="match status" value="1"/>
</dbReference>
<dbReference type="FunFam" id="3.30.750.80:FF:000003">
    <property type="entry name" value="Ribosomal RNA large subunit methyltransferase K/L"/>
    <property type="match status" value="1"/>
</dbReference>
<dbReference type="Gene3D" id="3.30.2130.30">
    <property type="match status" value="1"/>
</dbReference>
<dbReference type="Gene3D" id="3.30.750.80">
    <property type="entry name" value="RNA methyltransferase domain (HRMD) like"/>
    <property type="match status" value="1"/>
</dbReference>
<dbReference type="Gene3D" id="3.40.50.150">
    <property type="entry name" value="Vaccinia Virus protein VP39"/>
    <property type="match status" value="2"/>
</dbReference>
<dbReference type="HAMAP" id="MF_01858">
    <property type="entry name" value="23SrRNA_methyltr_KL"/>
    <property type="match status" value="1"/>
</dbReference>
<dbReference type="InterPro" id="IPR017244">
    <property type="entry name" value="23SrRNA_methyltr_KL"/>
</dbReference>
<dbReference type="InterPro" id="IPR000241">
    <property type="entry name" value="RlmKL-like_Mtase"/>
</dbReference>
<dbReference type="InterPro" id="IPR053943">
    <property type="entry name" value="RlmKL-like_Mtase_CS"/>
</dbReference>
<dbReference type="InterPro" id="IPR054170">
    <property type="entry name" value="RlmL_1st"/>
</dbReference>
<dbReference type="InterPro" id="IPR019614">
    <property type="entry name" value="SAM-dep_methyl-trfase"/>
</dbReference>
<dbReference type="InterPro" id="IPR029063">
    <property type="entry name" value="SAM-dependent_MTases_sf"/>
</dbReference>
<dbReference type="InterPro" id="IPR004114">
    <property type="entry name" value="THUMP_dom"/>
</dbReference>
<dbReference type="NCBIfam" id="NF008748">
    <property type="entry name" value="PRK11783.1"/>
    <property type="match status" value="1"/>
</dbReference>
<dbReference type="PANTHER" id="PTHR47313">
    <property type="entry name" value="RIBOSOMAL RNA LARGE SUBUNIT METHYLTRANSFERASE K/L"/>
    <property type="match status" value="1"/>
</dbReference>
<dbReference type="PANTHER" id="PTHR47313:SF1">
    <property type="entry name" value="RIBOSOMAL RNA LARGE SUBUNIT METHYLTRANSFERASE K_L"/>
    <property type="match status" value="1"/>
</dbReference>
<dbReference type="Pfam" id="PF10672">
    <property type="entry name" value="Methyltrans_SAM"/>
    <property type="match status" value="1"/>
</dbReference>
<dbReference type="Pfam" id="PF22020">
    <property type="entry name" value="RlmL_1st"/>
    <property type="match status" value="1"/>
</dbReference>
<dbReference type="Pfam" id="PF02926">
    <property type="entry name" value="THUMP"/>
    <property type="match status" value="1"/>
</dbReference>
<dbReference type="Pfam" id="PF01170">
    <property type="entry name" value="UPF0020"/>
    <property type="match status" value="1"/>
</dbReference>
<dbReference type="PIRSF" id="PIRSF037618">
    <property type="entry name" value="RNA_Mtase_bacteria_prd"/>
    <property type="match status" value="1"/>
</dbReference>
<dbReference type="SMART" id="SM00981">
    <property type="entry name" value="THUMP"/>
    <property type="match status" value="1"/>
</dbReference>
<dbReference type="SUPFAM" id="SSF53335">
    <property type="entry name" value="S-adenosyl-L-methionine-dependent methyltransferases"/>
    <property type="match status" value="2"/>
</dbReference>
<dbReference type="PROSITE" id="PS51165">
    <property type="entry name" value="THUMP"/>
    <property type="match status" value="1"/>
</dbReference>
<dbReference type="PROSITE" id="PS01261">
    <property type="entry name" value="UPF0020"/>
    <property type="match status" value="1"/>
</dbReference>
<comment type="function">
    <text evidence="1">Specifically methylates the guanine in position 2445 (m2G2445) and the guanine in position 2069 (m7G2069) of 23S rRNA.</text>
</comment>
<comment type="catalytic activity">
    <reaction evidence="1">
        <text>guanosine(2445) in 23S rRNA + S-adenosyl-L-methionine = N(2)-methylguanosine(2445) in 23S rRNA + S-adenosyl-L-homocysteine + H(+)</text>
        <dbReference type="Rhea" id="RHEA:42740"/>
        <dbReference type="Rhea" id="RHEA-COMP:10215"/>
        <dbReference type="Rhea" id="RHEA-COMP:10216"/>
        <dbReference type="ChEBI" id="CHEBI:15378"/>
        <dbReference type="ChEBI" id="CHEBI:57856"/>
        <dbReference type="ChEBI" id="CHEBI:59789"/>
        <dbReference type="ChEBI" id="CHEBI:74269"/>
        <dbReference type="ChEBI" id="CHEBI:74481"/>
        <dbReference type="EC" id="2.1.1.173"/>
    </reaction>
</comment>
<comment type="catalytic activity">
    <reaction evidence="1">
        <text>guanosine(2069) in 23S rRNA + S-adenosyl-L-methionine = N(2)-methylguanosine(2069) in 23S rRNA + S-adenosyl-L-homocysteine + H(+)</text>
        <dbReference type="Rhea" id="RHEA:43772"/>
        <dbReference type="Rhea" id="RHEA-COMP:10688"/>
        <dbReference type="Rhea" id="RHEA-COMP:10689"/>
        <dbReference type="ChEBI" id="CHEBI:15378"/>
        <dbReference type="ChEBI" id="CHEBI:57856"/>
        <dbReference type="ChEBI" id="CHEBI:59789"/>
        <dbReference type="ChEBI" id="CHEBI:74269"/>
        <dbReference type="ChEBI" id="CHEBI:74481"/>
        <dbReference type="EC" id="2.1.1.264"/>
    </reaction>
</comment>
<comment type="subcellular location">
    <subcellularLocation>
        <location evidence="1">Cytoplasm</location>
    </subcellularLocation>
</comment>
<comment type="similarity">
    <text evidence="1">Belongs to the methyltransferase superfamily. RlmKL family.</text>
</comment>
<comment type="sequence caution" evidence="2">
    <conflict type="erroneous initiation">
        <sequence resource="EMBL-CDS" id="AAF85448"/>
    </conflict>
    <text>Extended N-terminus.</text>
</comment>
<keyword id="KW-0963">Cytoplasm</keyword>
<keyword id="KW-0489">Methyltransferase</keyword>
<keyword id="KW-0694">RNA-binding</keyword>
<keyword id="KW-0698">rRNA processing</keyword>
<keyword id="KW-0949">S-adenosyl-L-methionine</keyword>
<keyword id="KW-0808">Transferase</keyword>